<protein>
    <recommendedName>
        <fullName evidence="1">Uridine kinase</fullName>
        <ecNumber evidence="1">2.7.1.48</ecNumber>
    </recommendedName>
    <alternativeName>
        <fullName evidence="1">Cytidine monophosphokinase</fullName>
    </alternativeName>
    <alternativeName>
        <fullName evidence="1">Uridine monophosphokinase</fullName>
    </alternativeName>
</protein>
<name>URK_STRPG</name>
<evidence type="ECO:0000255" key="1">
    <source>
        <dbReference type="HAMAP-Rule" id="MF_00551"/>
    </source>
</evidence>
<reference key="1">
    <citation type="journal article" date="2007" name="J. Bacteriol.">
        <title>Complete genome of acute rheumatic fever-associated serotype M5 Streptococcus pyogenes strain Manfredo.</title>
        <authorList>
            <person name="Holden M.T.G."/>
            <person name="Scott A."/>
            <person name="Cherevach I."/>
            <person name="Chillingworth T."/>
            <person name="Churcher C."/>
            <person name="Cronin A."/>
            <person name="Dowd L."/>
            <person name="Feltwell T."/>
            <person name="Hamlin N."/>
            <person name="Holroyd S."/>
            <person name="Jagels K."/>
            <person name="Moule S."/>
            <person name="Mungall K."/>
            <person name="Quail M.A."/>
            <person name="Price C."/>
            <person name="Rabbinowitsch E."/>
            <person name="Sharp S."/>
            <person name="Skelton J."/>
            <person name="Whitehead S."/>
            <person name="Barrell B.G."/>
            <person name="Kehoe M."/>
            <person name="Parkhill J."/>
        </authorList>
    </citation>
    <scope>NUCLEOTIDE SEQUENCE [LARGE SCALE GENOMIC DNA]</scope>
    <source>
        <strain>Manfredo</strain>
    </source>
</reference>
<keyword id="KW-0067">ATP-binding</keyword>
<keyword id="KW-0963">Cytoplasm</keyword>
<keyword id="KW-0418">Kinase</keyword>
<keyword id="KW-0547">Nucleotide-binding</keyword>
<keyword id="KW-0808">Transferase</keyword>
<dbReference type="EC" id="2.7.1.48" evidence="1"/>
<dbReference type="EMBL" id="AM295007">
    <property type="protein sequence ID" value="CAM30074.1"/>
    <property type="molecule type" value="Genomic_DNA"/>
</dbReference>
<dbReference type="RefSeq" id="WP_002984060.1">
    <property type="nucleotide sequence ID" value="NC_009332.1"/>
</dbReference>
<dbReference type="SMR" id="A2RDZ9"/>
<dbReference type="GeneID" id="69900663"/>
<dbReference type="KEGG" id="spf:SpyM50744"/>
<dbReference type="HOGENOM" id="CLU_021278_1_2_9"/>
<dbReference type="UniPathway" id="UPA00574">
    <property type="reaction ID" value="UER00637"/>
</dbReference>
<dbReference type="UniPathway" id="UPA00579">
    <property type="reaction ID" value="UER00640"/>
</dbReference>
<dbReference type="GO" id="GO:0005737">
    <property type="term" value="C:cytoplasm"/>
    <property type="evidence" value="ECO:0007669"/>
    <property type="project" value="UniProtKB-SubCell"/>
</dbReference>
<dbReference type="GO" id="GO:0005524">
    <property type="term" value="F:ATP binding"/>
    <property type="evidence" value="ECO:0007669"/>
    <property type="project" value="UniProtKB-UniRule"/>
</dbReference>
<dbReference type="GO" id="GO:0043771">
    <property type="term" value="F:cytidine kinase activity"/>
    <property type="evidence" value="ECO:0007669"/>
    <property type="project" value="RHEA"/>
</dbReference>
<dbReference type="GO" id="GO:0004849">
    <property type="term" value="F:uridine kinase activity"/>
    <property type="evidence" value="ECO:0007669"/>
    <property type="project" value="UniProtKB-UniRule"/>
</dbReference>
<dbReference type="GO" id="GO:0044211">
    <property type="term" value="P:CTP salvage"/>
    <property type="evidence" value="ECO:0007669"/>
    <property type="project" value="UniProtKB-UniRule"/>
</dbReference>
<dbReference type="GO" id="GO:0044206">
    <property type="term" value="P:UMP salvage"/>
    <property type="evidence" value="ECO:0007669"/>
    <property type="project" value="UniProtKB-UniRule"/>
</dbReference>
<dbReference type="CDD" id="cd02023">
    <property type="entry name" value="UMPK"/>
    <property type="match status" value="1"/>
</dbReference>
<dbReference type="Gene3D" id="3.40.50.300">
    <property type="entry name" value="P-loop containing nucleotide triphosphate hydrolases"/>
    <property type="match status" value="1"/>
</dbReference>
<dbReference type="HAMAP" id="MF_00551">
    <property type="entry name" value="Uridine_kinase"/>
    <property type="match status" value="1"/>
</dbReference>
<dbReference type="InterPro" id="IPR027417">
    <property type="entry name" value="P-loop_NTPase"/>
</dbReference>
<dbReference type="InterPro" id="IPR006083">
    <property type="entry name" value="PRK/URK"/>
</dbReference>
<dbReference type="InterPro" id="IPR026008">
    <property type="entry name" value="Uridine_kinase"/>
</dbReference>
<dbReference type="InterPro" id="IPR000764">
    <property type="entry name" value="Uridine_kinase-like"/>
</dbReference>
<dbReference type="NCBIfam" id="NF004018">
    <property type="entry name" value="PRK05480.1"/>
    <property type="match status" value="1"/>
</dbReference>
<dbReference type="NCBIfam" id="TIGR00235">
    <property type="entry name" value="udk"/>
    <property type="match status" value="1"/>
</dbReference>
<dbReference type="PANTHER" id="PTHR10285">
    <property type="entry name" value="URIDINE KINASE"/>
    <property type="match status" value="1"/>
</dbReference>
<dbReference type="Pfam" id="PF00485">
    <property type="entry name" value="PRK"/>
    <property type="match status" value="1"/>
</dbReference>
<dbReference type="PRINTS" id="PR00988">
    <property type="entry name" value="URIDINKINASE"/>
</dbReference>
<dbReference type="SUPFAM" id="SSF52540">
    <property type="entry name" value="P-loop containing nucleoside triphosphate hydrolases"/>
    <property type="match status" value="1"/>
</dbReference>
<proteinExistence type="inferred from homology"/>
<organism>
    <name type="scientific">Streptococcus pyogenes serotype M5 (strain Manfredo)</name>
    <dbReference type="NCBI Taxonomy" id="160491"/>
    <lineage>
        <taxon>Bacteria</taxon>
        <taxon>Bacillati</taxon>
        <taxon>Bacillota</taxon>
        <taxon>Bacilli</taxon>
        <taxon>Lactobacillales</taxon>
        <taxon>Streptococcaceae</taxon>
        <taxon>Streptococcus</taxon>
    </lineage>
</organism>
<sequence>MLKKPIIIGVTGGSGGGKTSVSRAILDSFPNARIAMIQHDSYYKDQSHMSFEERVKTNYDHPLAFDTDFMIQQLKELLAGRPVDIPIYDYKKHTRSNTTFRQDPQDVIIVEGILVLEDERLRDLMDIKLFVDTDDDIRIIRRIKRDMMERGRSLESIIDQYTSVVKPMYHQFIEPSKRYADIVIPEGVSNVVAIDVINSKIASILGEV</sequence>
<accession>A2RDZ9</accession>
<gene>
    <name evidence="1" type="primary">udk</name>
    <name type="ordered locus">SpyM50744</name>
</gene>
<comment type="catalytic activity">
    <reaction evidence="1">
        <text>uridine + ATP = UMP + ADP + H(+)</text>
        <dbReference type="Rhea" id="RHEA:16825"/>
        <dbReference type="ChEBI" id="CHEBI:15378"/>
        <dbReference type="ChEBI" id="CHEBI:16704"/>
        <dbReference type="ChEBI" id="CHEBI:30616"/>
        <dbReference type="ChEBI" id="CHEBI:57865"/>
        <dbReference type="ChEBI" id="CHEBI:456216"/>
        <dbReference type="EC" id="2.7.1.48"/>
    </reaction>
</comment>
<comment type="catalytic activity">
    <reaction evidence="1">
        <text>cytidine + ATP = CMP + ADP + H(+)</text>
        <dbReference type="Rhea" id="RHEA:24674"/>
        <dbReference type="ChEBI" id="CHEBI:15378"/>
        <dbReference type="ChEBI" id="CHEBI:17562"/>
        <dbReference type="ChEBI" id="CHEBI:30616"/>
        <dbReference type="ChEBI" id="CHEBI:60377"/>
        <dbReference type="ChEBI" id="CHEBI:456216"/>
        <dbReference type="EC" id="2.7.1.48"/>
    </reaction>
</comment>
<comment type="pathway">
    <text evidence="1">Pyrimidine metabolism; CTP biosynthesis via salvage pathway; CTP from cytidine: step 1/3.</text>
</comment>
<comment type="pathway">
    <text evidence="1">Pyrimidine metabolism; UMP biosynthesis via salvage pathway; UMP from uridine: step 1/1.</text>
</comment>
<comment type="subcellular location">
    <subcellularLocation>
        <location evidence="1">Cytoplasm</location>
    </subcellularLocation>
</comment>
<comment type="similarity">
    <text evidence="1">Belongs to the uridine kinase family.</text>
</comment>
<feature type="chain" id="PRO_1000017909" description="Uridine kinase">
    <location>
        <begin position="1"/>
        <end position="208"/>
    </location>
</feature>
<feature type="binding site" evidence="1">
    <location>
        <begin position="12"/>
        <end position="19"/>
    </location>
    <ligand>
        <name>ATP</name>
        <dbReference type="ChEBI" id="CHEBI:30616"/>
    </ligand>
</feature>